<name>RECA_PSEFS</name>
<dbReference type="EMBL" id="AM181176">
    <property type="protein sequence ID" value="CAY47450.1"/>
    <property type="molecule type" value="Genomic_DNA"/>
</dbReference>
<dbReference type="RefSeq" id="WP_012722521.1">
    <property type="nucleotide sequence ID" value="NC_012660.1"/>
</dbReference>
<dbReference type="SMR" id="C3KDG0"/>
<dbReference type="STRING" id="294.SRM1_01189"/>
<dbReference type="GeneID" id="93462808"/>
<dbReference type="eggNOG" id="COG0468">
    <property type="taxonomic scope" value="Bacteria"/>
</dbReference>
<dbReference type="HOGENOM" id="CLU_040469_3_2_6"/>
<dbReference type="OrthoDB" id="9776733at2"/>
<dbReference type="GO" id="GO:0005829">
    <property type="term" value="C:cytosol"/>
    <property type="evidence" value="ECO:0007669"/>
    <property type="project" value="TreeGrafter"/>
</dbReference>
<dbReference type="GO" id="GO:0005524">
    <property type="term" value="F:ATP binding"/>
    <property type="evidence" value="ECO:0007669"/>
    <property type="project" value="UniProtKB-UniRule"/>
</dbReference>
<dbReference type="GO" id="GO:0016887">
    <property type="term" value="F:ATP hydrolysis activity"/>
    <property type="evidence" value="ECO:0007669"/>
    <property type="project" value="InterPro"/>
</dbReference>
<dbReference type="GO" id="GO:0140664">
    <property type="term" value="F:ATP-dependent DNA damage sensor activity"/>
    <property type="evidence" value="ECO:0007669"/>
    <property type="project" value="InterPro"/>
</dbReference>
<dbReference type="GO" id="GO:0003684">
    <property type="term" value="F:damaged DNA binding"/>
    <property type="evidence" value="ECO:0007669"/>
    <property type="project" value="UniProtKB-UniRule"/>
</dbReference>
<dbReference type="GO" id="GO:0003697">
    <property type="term" value="F:single-stranded DNA binding"/>
    <property type="evidence" value="ECO:0007669"/>
    <property type="project" value="UniProtKB-UniRule"/>
</dbReference>
<dbReference type="GO" id="GO:0006310">
    <property type="term" value="P:DNA recombination"/>
    <property type="evidence" value="ECO:0007669"/>
    <property type="project" value="UniProtKB-UniRule"/>
</dbReference>
<dbReference type="GO" id="GO:0006281">
    <property type="term" value="P:DNA repair"/>
    <property type="evidence" value="ECO:0007669"/>
    <property type="project" value="UniProtKB-UniRule"/>
</dbReference>
<dbReference type="GO" id="GO:0009432">
    <property type="term" value="P:SOS response"/>
    <property type="evidence" value="ECO:0007669"/>
    <property type="project" value="UniProtKB-UniRule"/>
</dbReference>
<dbReference type="CDD" id="cd00983">
    <property type="entry name" value="RecA"/>
    <property type="match status" value="1"/>
</dbReference>
<dbReference type="FunFam" id="3.40.50.300:FF:000087">
    <property type="entry name" value="Recombinase RecA"/>
    <property type="match status" value="1"/>
</dbReference>
<dbReference type="Gene3D" id="3.40.50.300">
    <property type="entry name" value="P-loop containing nucleotide triphosphate hydrolases"/>
    <property type="match status" value="1"/>
</dbReference>
<dbReference type="HAMAP" id="MF_00268">
    <property type="entry name" value="RecA"/>
    <property type="match status" value="1"/>
</dbReference>
<dbReference type="InterPro" id="IPR003593">
    <property type="entry name" value="AAA+_ATPase"/>
</dbReference>
<dbReference type="InterPro" id="IPR013765">
    <property type="entry name" value="DNA_recomb/repair_RecA"/>
</dbReference>
<dbReference type="InterPro" id="IPR020584">
    <property type="entry name" value="DNA_recomb/repair_RecA_CS"/>
</dbReference>
<dbReference type="InterPro" id="IPR027417">
    <property type="entry name" value="P-loop_NTPase"/>
</dbReference>
<dbReference type="InterPro" id="IPR049261">
    <property type="entry name" value="RecA-like_C"/>
</dbReference>
<dbReference type="InterPro" id="IPR049428">
    <property type="entry name" value="RecA-like_N"/>
</dbReference>
<dbReference type="InterPro" id="IPR020588">
    <property type="entry name" value="RecA_ATP-bd"/>
</dbReference>
<dbReference type="InterPro" id="IPR023400">
    <property type="entry name" value="RecA_C_sf"/>
</dbReference>
<dbReference type="InterPro" id="IPR020587">
    <property type="entry name" value="RecA_monomer-monomer_interface"/>
</dbReference>
<dbReference type="NCBIfam" id="TIGR02012">
    <property type="entry name" value="tigrfam_recA"/>
    <property type="match status" value="1"/>
</dbReference>
<dbReference type="PANTHER" id="PTHR45900:SF1">
    <property type="entry name" value="MITOCHONDRIAL DNA REPAIR PROTEIN RECA HOMOLOG-RELATED"/>
    <property type="match status" value="1"/>
</dbReference>
<dbReference type="PANTHER" id="PTHR45900">
    <property type="entry name" value="RECA"/>
    <property type="match status" value="1"/>
</dbReference>
<dbReference type="Pfam" id="PF00154">
    <property type="entry name" value="RecA"/>
    <property type="match status" value="1"/>
</dbReference>
<dbReference type="Pfam" id="PF21096">
    <property type="entry name" value="RecA_C"/>
    <property type="match status" value="1"/>
</dbReference>
<dbReference type="PRINTS" id="PR00142">
    <property type="entry name" value="RECA"/>
</dbReference>
<dbReference type="SMART" id="SM00382">
    <property type="entry name" value="AAA"/>
    <property type="match status" value="1"/>
</dbReference>
<dbReference type="SUPFAM" id="SSF52540">
    <property type="entry name" value="P-loop containing nucleoside triphosphate hydrolases"/>
    <property type="match status" value="1"/>
</dbReference>
<dbReference type="SUPFAM" id="SSF54752">
    <property type="entry name" value="RecA protein, C-terminal domain"/>
    <property type="match status" value="1"/>
</dbReference>
<dbReference type="PROSITE" id="PS00321">
    <property type="entry name" value="RECA_1"/>
    <property type="match status" value="1"/>
</dbReference>
<dbReference type="PROSITE" id="PS50162">
    <property type="entry name" value="RECA_2"/>
    <property type="match status" value="1"/>
</dbReference>
<dbReference type="PROSITE" id="PS50163">
    <property type="entry name" value="RECA_3"/>
    <property type="match status" value="1"/>
</dbReference>
<gene>
    <name evidence="1" type="primary">recA</name>
    <name type="ordered locus">PFLU_1189</name>
</gene>
<reference key="1">
    <citation type="journal article" date="2009" name="Genome Biol.">
        <title>Genomic and genetic analyses of diversity and plant interactions of Pseudomonas fluorescens.</title>
        <authorList>
            <person name="Silby M.W."/>
            <person name="Cerdeno-Tarraga A.M."/>
            <person name="Vernikos G.S."/>
            <person name="Giddens S.R."/>
            <person name="Jackson R.W."/>
            <person name="Preston G.M."/>
            <person name="Zhang X.-X."/>
            <person name="Moon C.D."/>
            <person name="Gehrig S.M."/>
            <person name="Godfrey S.A.C."/>
            <person name="Knight C.G."/>
            <person name="Malone J.G."/>
            <person name="Robinson Z."/>
            <person name="Spiers A.J."/>
            <person name="Harris S."/>
            <person name="Challis G.L."/>
            <person name="Yaxley A.M."/>
            <person name="Harris D."/>
            <person name="Seeger K."/>
            <person name="Murphy L."/>
            <person name="Rutter S."/>
            <person name="Squares R."/>
            <person name="Quail M.A."/>
            <person name="Saunders E."/>
            <person name="Mavromatis K."/>
            <person name="Brettin T.S."/>
            <person name="Bentley S.D."/>
            <person name="Hothersall J."/>
            <person name="Stephens E."/>
            <person name="Thomas C.M."/>
            <person name="Parkhill J."/>
            <person name="Levy S.B."/>
            <person name="Rainey P.B."/>
            <person name="Thomson N.R."/>
        </authorList>
    </citation>
    <scope>NUCLEOTIDE SEQUENCE [LARGE SCALE GENOMIC DNA]</scope>
    <source>
        <strain>SBW25</strain>
    </source>
</reference>
<evidence type="ECO:0000255" key="1">
    <source>
        <dbReference type="HAMAP-Rule" id="MF_00268"/>
    </source>
</evidence>
<accession>C3KDG0</accession>
<organism>
    <name type="scientific">Pseudomonas fluorescens (strain SBW25)</name>
    <dbReference type="NCBI Taxonomy" id="216595"/>
    <lineage>
        <taxon>Bacteria</taxon>
        <taxon>Pseudomonadati</taxon>
        <taxon>Pseudomonadota</taxon>
        <taxon>Gammaproteobacteria</taxon>
        <taxon>Pseudomonadales</taxon>
        <taxon>Pseudomonadaceae</taxon>
        <taxon>Pseudomonas</taxon>
    </lineage>
</organism>
<sequence length="352" mass="37522">MDDNKKKALAAALGQIERQFGKGAVMRMGDHDRQAIPAISTGSLGLDIALGIGGLPKGRIVEIYGPESSGKTTLTLSVIAQAQKMGATCAFVDAEHALDPEYAGKLGVNVDDLLVSQPDTGEQALEITDMLVRSNAIDVIVVDSVAALVPKAEIEGEMGDMHVGLQARLMSQALRKITGNIKNANCLVIFINQIRMKIGVMFGSPETTTGGNALKFYASVRLDIRRTGAVKEGDEVVGSETRVKVVKNKVAPPFRQAEFQILYGKGIYLNGEMIDLGVLHGFVEKSGAWYAYNGSKIGQGKANSAKFLADNPDIAATLEKQIRDKLLTAAPDVKAAANREPVAEVEEADTDI</sequence>
<comment type="function">
    <text evidence="1">Can catalyze the hydrolysis of ATP in the presence of single-stranded DNA, the ATP-dependent uptake of single-stranded DNA by duplex DNA, and the ATP-dependent hybridization of homologous single-stranded DNAs. It interacts with LexA causing its activation and leading to its autocatalytic cleavage.</text>
</comment>
<comment type="subcellular location">
    <subcellularLocation>
        <location evidence="1">Cytoplasm</location>
    </subcellularLocation>
</comment>
<comment type="similarity">
    <text evidence="1">Belongs to the RecA family.</text>
</comment>
<protein>
    <recommendedName>
        <fullName evidence="1">Protein RecA</fullName>
    </recommendedName>
    <alternativeName>
        <fullName evidence="1">Recombinase A</fullName>
    </alternativeName>
</protein>
<feature type="chain" id="PRO_1000204712" description="Protein RecA">
    <location>
        <begin position="1"/>
        <end position="352"/>
    </location>
</feature>
<feature type="binding site" evidence="1">
    <location>
        <begin position="65"/>
        <end position="72"/>
    </location>
    <ligand>
        <name>ATP</name>
        <dbReference type="ChEBI" id="CHEBI:30616"/>
    </ligand>
</feature>
<keyword id="KW-0067">ATP-binding</keyword>
<keyword id="KW-0963">Cytoplasm</keyword>
<keyword id="KW-0227">DNA damage</keyword>
<keyword id="KW-0233">DNA recombination</keyword>
<keyword id="KW-0234">DNA repair</keyword>
<keyword id="KW-0238">DNA-binding</keyword>
<keyword id="KW-0547">Nucleotide-binding</keyword>
<keyword id="KW-0742">SOS response</keyword>
<proteinExistence type="inferred from homology"/>